<reference key="1">
    <citation type="journal article" date="1985" name="Gene">
        <title>Molecular characterization and genetic mapping of two clusters of genes encoding chlorophyll a/b-binding proteins in Lycopersicon esculentum (tomato).</title>
        <authorList>
            <person name="Pichersky E."/>
            <person name="Bernatzky R."/>
            <person name="Tanksley S.D."/>
            <person name="Breidenbach R.B."/>
            <person name="Kausch A.P."/>
            <person name="Cashmore A.R."/>
        </authorList>
    </citation>
    <scope>NUCLEOTIDE SEQUENCE [GENOMIC DNA]</scope>
    <source>
        <strain>cv. T6</strain>
    </source>
</reference>
<keyword id="KW-0148">Chlorophyll</keyword>
<keyword id="KW-0150">Chloroplast</keyword>
<keyword id="KW-0157">Chromophore</keyword>
<keyword id="KW-0460">Magnesium</keyword>
<keyword id="KW-0472">Membrane</keyword>
<keyword id="KW-0479">Metal-binding</keyword>
<keyword id="KW-0597">Phosphoprotein</keyword>
<keyword id="KW-0602">Photosynthesis</keyword>
<keyword id="KW-0603">Photosystem I</keyword>
<keyword id="KW-0604">Photosystem II</keyword>
<keyword id="KW-0934">Plastid</keyword>
<keyword id="KW-1185">Reference proteome</keyword>
<keyword id="KW-0793">Thylakoid</keyword>
<keyword id="KW-0809">Transit peptide</keyword>
<keyword id="KW-0812">Transmembrane</keyword>
<keyword id="KW-1133">Transmembrane helix</keyword>
<dbReference type="EMBL" id="M30619">
    <property type="protein sequence ID" value="AAA34154.1"/>
    <property type="molecule type" value="Genomic_DNA"/>
</dbReference>
<dbReference type="EMBL" id="M30620">
    <property type="protein sequence ID" value="AAA34155.1"/>
    <property type="molecule type" value="Genomic_DNA"/>
</dbReference>
<dbReference type="STRING" id="4081.P14276"/>
<dbReference type="PaxDb" id="4081-Solyc08g067320.1.1"/>
<dbReference type="InParanoid" id="P14276"/>
<dbReference type="Proteomes" id="UP000004994">
    <property type="component" value="Unplaced"/>
</dbReference>
<dbReference type="ExpressionAtlas" id="P14276">
    <property type="expression patterns" value="baseline and differential"/>
</dbReference>
<dbReference type="GO" id="GO:0009535">
    <property type="term" value="C:chloroplast thylakoid membrane"/>
    <property type="evidence" value="ECO:0000318"/>
    <property type="project" value="GO_Central"/>
</dbReference>
<dbReference type="GO" id="GO:0009522">
    <property type="term" value="C:photosystem I"/>
    <property type="evidence" value="ECO:0007669"/>
    <property type="project" value="UniProtKB-KW"/>
</dbReference>
<dbReference type="GO" id="GO:0009523">
    <property type="term" value="C:photosystem II"/>
    <property type="evidence" value="ECO:0007669"/>
    <property type="project" value="UniProtKB-KW"/>
</dbReference>
<dbReference type="GO" id="GO:0016168">
    <property type="term" value="F:chlorophyll binding"/>
    <property type="evidence" value="ECO:0007669"/>
    <property type="project" value="UniProtKB-KW"/>
</dbReference>
<dbReference type="GO" id="GO:0046872">
    <property type="term" value="F:metal ion binding"/>
    <property type="evidence" value="ECO:0007669"/>
    <property type="project" value="UniProtKB-KW"/>
</dbReference>
<dbReference type="GO" id="GO:0009768">
    <property type="term" value="P:photosynthesis, light harvesting in photosystem I"/>
    <property type="evidence" value="ECO:0000318"/>
    <property type="project" value="GO_Central"/>
</dbReference>
<dbReference type="GO" id="GO:0009416">
    <property type="term" value="P:response to light stimulus"/>
    <property type="evidence" value="ECO:0000318"/>
    <property type="project" value="GO_Central"/>
</dbReference>
<dbReference type="FunFam" id="1.10.3460.10:FF:000013">
    <property type="entry name" value="Chlorophyll a-b binding protein 3A, chloroplastic"/>
    <property type="match status" value="1"/>
</dbReference>
<dbReference type="Gene3D" id="1.10.3460.10">
    <property type="entry name" value="Chlorophyll a/b binding protein domain"/>
    <property type="match status" value="1"/>
</dbReference>
<dbReference type="InterPro" id="IPR001344">
    <property type="entry name" value="Chloro_AB-bd_pln"/>
</dbReference>
<dbReference type="InterPro" id="IPR022796">
    <property type="entry name" value="Chloroa_b-bind"/>
</dbReference>
<dbReference type="PANTHER" id="PTHR21649">
    <property type="entry name" value="CHLOROPHYLL A/B BINDING PROTEIN"/>
    <property type="match status" value="1"/>
</dbReference>
<dbReference type="Pfam" id="PF00504">
    <property type="entry name" value="Chloroa_b-bind"/>
    <property type="match status" value="1"/>
</dbReference>
<dbReference type="SUPFAM" id="SSF103511">
    <property type="entry name" value="Chlorophyll a-b binding protein"/>
    <property type="match status" value="1"/>
</dbReference>
<evidence type="ECO:0000250" key="1"/>
<evidence type="ECO:0000250" key="2">
    <source>
        <dbReference type="UniProtKB" id="P07371"/>
    </source>
</evidence>
<evidence type="ECO:0000250" key="3">
    <source>
        <dbReference type="UniProtKB" id="P12333"/>
    </source>
</evidence>
<evidence type="ECO:0000255" key="4"/>
<evidence type="ECO:0000305" key="5"/>
<gene>
    <name type="primary">CAB3A</name>
</gene>
<accession>P14276</accession>
<name>CB2E_SOLLC</name>
<comment type="function">
    <text>The light-harvesting complex (LHC) functions as a light receptor, it captures and delivers excitation energy to photosystems with which it is closely associated.</text>
</comment>
<comment type="cofactor">
    <text evidence="1">Binds at least 14 chlorophylls (8 Chl-a and 6 Chl-b) and carotenoids such as lutein and neoxanthin.</text>
</comment>
<comment type="subunit">
    <text>The LHC complex consists of chlorophyll a-b binding proteins.</text>
</comment>
<comment type="subcellular location">
    <subcellularLocation>
        <location>Plastid</location>
        <location>Chloroplast thylakoid membrane</location>
        <topology>Multi-pass membrane protein</topology>
    </subcellularLocation>
</comment>
<comment type="domain">
    <text>The N-terminus of the protein extends into the stroma where it is involved with adhesion of granal membranes and post-translational modifications; both are believed to mediate the distribution of excitation energy between photosystems I and II.</text>
</comment>
<comment type="PTM">
    <text evidence="1">Photoregulated by reversible phosphorylation of its threonine residues.</text>
</comment>
<comment type="similarity">
    <text evidence="5">Belongs to the light-harvesting chlorophyll a/b-binding (LHC) protein family.</text>
</comment>
<protein>
    <recommendedName>
        <fullName>Chlorophyll a-b binding protein 3A, chloroplastic</fullName>
    </recommendedName>
    <alternativeName>
        <fullName>LHCII type I CAB-3A</fullName>
        <shortName>LHCP</shortName>
    </alternativeName>
</protein>
<feature type="transit peptide" description="Chloroplast">
    <location>
        <begin position="1"/>
        <end position="34"/>
    </location>
</feature>
<feature type="chain" id="PRO_0000003665" description="Chlorophyll a-b binding protein 3A, chloroplastic">
    <location>
        <begin position="35"/>
        <end position="267"/>
    </location>
</feature>
<feature type="transmembrane region" description="Helical" evidence="4">
    <location>
        <begin position="153"/>
        <end position="173"/>
    </location>
</feature>
<feature type="transmembrane region" description="Helical" evidence="4">
    <location>
        <begin position="221"/>
        <end position="241"/>
    </location>
</feature>
<feature type="binding site" description="axial binding residue" evidence="3">
    <location>
        <position position="154"/>
    </location>
    <ligand>
        <name>chlorophyll b</name>
        <dbReference type="ChEBI" id="CHEBI:61721"/>
        <label>2</label>
    </ligand>
    <ligandPart>
        <name>Mg</name>
        <dbReference type="ChEBI" id="CHEBI:25107"/>
    </ligandPart>
</feature>
<feature type="binding site" evidence="1">
    <location>
        <position position="158"/>
    </location>
    <ligand>
        <name>chlorophyll b</name>
        <dbReference type="ChEBI" id="CHEBI:61721"/>
        <label>3</label>
    </ligand>
</feature>
<feature type="binding site" evidence="1">
    <location>
        <position position="166"/>
    </location>
    <ligand>
        <name>chlorophyll b</name>
        <dbReference type="ChEBI" id="CHEBI:61721"/>
        <label>4</label>
    </ligand>
</feature>
<feature type="binding site" evidence="2">
    <location>
        <position position="166"/>
    </location>
    <ligand>
        <name>chlorophyll b</name>
        <dbReference type="ChEBI" id="CHEBI:61721"/>
        <label>5</label>
    </ligand>
</feature>
<feature type="binding site" description="axial binding residue" evidence="3">
    <location>
        <position position="174"/>
    </location>
    <ligand>
        <name>chlorophyll b</name>
        <dbReference type="ChEBI" id="CHEBI:61721"/>
        <label>3</label>
    </ligand>
    <ligandPart>
        <name>Mg</name>
        <dbReference type="ChEBI" id="CHEBI:25107"/>
    </ligandPart>
</feature>
<feature type="binding site" evidence="1">
    <location>
        <position position="177"/>
    </location>
    <ligand>
        <name>chlorophyll b</name>
        <dbReference type="ChEBI" id="CHEBI:61721"/>
        <label>4</label>
    </ligand>
</feature>
<feature type="binding site" evidence="1">
    <location>
        <position position="183"/>
    </location>
    <ligand>
        <name>chlorophyll b</name>
        <dbReference type="ChEBI" id="CHEBI:61721"/>
        <label>2</label>
    </ligand>
</feature>
<feature type="binding site" evidence="1">
    <location>
        <position position="214"/>
    </location>
    <ligand>
        <name>chlorophyll a</name>
        <dbReference type="ChEBI" id="CHEBI:58416"/>
        <label>5</label>
    </ligand>
</feature>
<feature type="binding site" description="axial binding residue" evidence="3">
    <location>
        <position position="215"/>
    </location>
    <ligand>
        <name>chlorophyll a</name>
        <dbReference type="ChEBI" id="CHEBI:58416"/>
        <label>3</label>
    </ligand>
    <ligandPart>
        <name>Mg</name>
        <dbReference type="ChEBI" id="CHEBI:25107"/>
    </ligandPart>
</feature>
<feature type="binding site" description="axial binding residue" evidence="3">
    <location>
        <position position="218"/>
    </location>
    <ligand>
        <name>chlorophyll a</name>
        <dbReference type="ChEBI" id="CHEBI:58416"/>
        <label>4</label>
    </ligand>
    <ligandPart>
        <name>Mg</name>
        <dbReference type="ChEBI" id="CHEBI:25107"/>
    </ligandPart>
</feature>
<feature type="binding site" evidence="1">
    <location>
        <position position="220"/>
    </location>
    <ligand>
        <name>chlorophyll a</name>
        <dbReference type="ChEBI" id="CHEBI:58416"/>
        <label>1</label>
    </ligand>
</feature>
<feature type="binding site" description="axial binding residue" evidence="3">
    <location>
        <position position="232"/>
    </location>
    <ligand>
        <name>chlorophyll a</name>
        <dbReference type="ChEBI" id="CHEBI:58416"/>
        <label>5</label>
    </ligand>
    <ligandPart>
        <name>Mg</name>
        <dbReference type="ChEBI" id="CHEBI:25107"/>
    </ligandPart>
</feature>
<feature type="binding site" description="axial binding residue" evidence="3">
    <location>
        <position position="247"/>
    </location>
    <ligand>
        <name>chlorophyll a</name>
        <dbReference type="ChEBI" id="CHEBI:58416"/>
        <label>6</label>
    </ligand>
    <ligandPart>
        <name>Mg</name>
        <dbReference type="ChEBI" id="CHEBI:25107"/>
    </ligandPart>
</feature>
<feature type="binding site" evidence="1">
    <location>
        <position position="256"/>
    </location>
    <ligand>
        <name>chlorophyll a</name>
        <dbReference type="ChEBI" id="CHEBI:58416"/>
        <label>6</label>
    </ligand>
</feature>
<feature type="binding site" evidence="1">
    <location>
        <position position="263"/>
    </location>
    <ligand>
        <name>chlorophyll b</name>
        <dbReference type="ChEBI" id="CHEBI:61721"/>
        <label>5</label>
    </ligand>
</feature>
<proteinExistence type="inferred from homology"/>
<sequence>MAASTMALSSSTFAGKTVKLAPSSSEITGNGRITMRKTAAKPKPASSGSPWXXXXXXXXXXXXXXXXXXXXXXXXXXXXXXXXXXXXXXXXXXXXXXXXXXXXXXXXXXXXXXXXXXXXXXXXXXXXXXXXXXXXXXXXXXXXXXXXXXXXSLVHAQSILAIWACQVVLMGAVEGYRIAGGPLGEVVDPLYPGGSFDPLGLAEDPEAFAELKVKEIKNGRLAMFSMFGFFVQAIVTGKGPLENLADHIADPVNNNAWAFATNFVPGK</sequence>
<organism>
    <name type="scientific">Solanum lycopersicum</name>
    <name type="common">Tomato</name>
    <name type="synonym">Lycopersicon esculentum</name>
    <dbReference type="NCBI Taxonomy" id="4081"/>
    <lineage>
        <taxon>Eukaryota</taxon>
        <taxon>Viridiplantae</taxon>
        <taxon>Streptophyta</taxon>
        <taxon>Embryophyta</taxon>
        <taxon>Tracheophyta</taxon>
        <taxon>Spermatophyta</taxon>
        <taxon>Magnoliopsida</taxon>
        <taxon>eudicotyledons</taxon>
        <taxon>Gunneridae</taxon>
        <taxon>Pentapetalae</taxon>
        <taxon>asterids</taxon>
        <taxon>lamiids</taxon>
        <taxon>Solanales</taxon>
        <taxon>Solanaceae</taxon>
        <taxon>Solanoideae</taxon>
        <taxon>Solaneae</taxon>
        <taxon>Solanum</taxon>
        <taxon>Solanum subgen. Lycopersicon</taxon>
    </lineage>
</organism>